<keyword id="KW-0903">Direct protein sequencing</keyword>
<keyword id="KW-0325">Glycoprotein</keyword>
<keyword id="KW-0964">Secreted</keyword>
<keyword id="KW-0732">Signal</keyword>
<sequence>MWCFIVFLTIFLPTLEGQYGPAVTGPSLPEELCTKDPQVSRGRFYRLKVRPSFYRRAHPLQVELYQTIHAYGPIIADAYVHVPETAKNSSTAALGIKTLGYWLPKNPDNYKISRALSCYNSVWGNDAIVANSDRELKFNLTGIWYPPTSEFDLIKRPFVKIVAYVTPDPDVRRRRWYRAESQPIRNLDYIAFQHHMRRYKAQMKAFRTQLEMFN</sequence>
<proteinExistence type="evidence at protein level"/>
<organism>
    <name type="scientific">Lottia gigantea</name>
    <name type="common">Giant owl limpet</name>
    <dbReference type="NCBI Taxonomy" id="225164"/>
    <lineage>
        <taxon>Eukaryota</taxon>
        <taxon>Metazoa</taxon>
        <taxon>Spiralia</taxon>
        <taxon>Lophotrochozoa</taxon>
        <taxon>Mollusca</taxon>
        <taxon>Gastropoda</taxon>
        <taxon>Patellogastropoda</taxon>
        <taxon>Lottioidea</taxon>
        <taxon>Lottiidae</taxon>
        <taxon>Lottia</taxon>
    </lineage>
</organism>
<comment type="subcellular location">
    <subcellularLocation>
        <location evidence="2">Secreted</location>
    </subcellularLocation>
</comment>
<comment type="tissue specificity">
    <text evidence="2">Component of the acid-insoluble organic matrix of calcified layers of the shell (at protein level).</text>
</comment>
<name>USP16_LOTGI</name>
<dbReference type="EMBL" id="FC624299">
    <property type="status" value="NOT_ANNOTATED_CDS"/>
    <property type="molecule type" value="mRNA"/>
</dbReference>
<dbReference type="RefSeq" id="XP_009049843.1">
    <property type="nucleotide sequence ID" value="XM_009051595.1"/>
</dbReference>
<dbReference type="EnsemblMetazoa" id="LotgiT231046">
    <property type="protein sequence ID" value="LotgiP231046"/>
    <property type="gene ID" value="LotgiG231046"/>
</dbReference>
<dbReference type="GeneID" id="20248444"/>
<dbReference type="KEGG" id="lgi:LOTGIDRAFT_231046"/>
<dbReference type="CTD" id="20248444"/>
<dbReference type="HOGENOM" id="CLU_1290278_0_0_1"/>
<dbReference type="OMA" id="PNITATW"/>
<dbReference type="OrthoDB" id="6057142at2759"/>
<dbReference type="GO" id="GO:0005576">
    <property type="term" value="C:extracellular region"/>
    <property type="evidence" value="ECO:0007669"/>
    <property type="project" value="UniProtKB-SubCell"/>
</dbReference>
<feature type="signal peptide" evidence="1">
    <location>
        <begin position="1"/>
        <end position="17"/>
    </location>
</feature>
<feature type="chain" id="PRO_0000415236" description="Uncharacterized shell protein 16" evidence="1">
    <location>
        <begin position="18"/>
        <end position="214"/>
    </location>
</feature>
<feature type="glycosylation site" description="N-linked (GlcNAc...) asparagine" evidence="1">
    <location>
        <position position="88"/>
    </location>
</feature>
<feature type="glycosylation site" description="N-linked (GlcNAc...) asparagine" evidence="1">
    <location>
        <position position="139"/>
    </location>
</feature>
<accession>B3A0R5</accession>
<evidence type="ECO:0000255" key="1"/>
<evidence type="ECO:0000269" key="2">
    <source>
    </source>
</evidence>
<evidence type="ECO:0000269" key="3">
    <source ref="1"/>
</evidence>
<evidence type="ECO:0000305" key="4"/>
<reference evidence="4" key="1">
    <citation type="submission" date="2007-12" db="EMBL/GenBank/DDBJ databases">
        <title>DOE Joint Genome Institute Lottia gigantea EST project.</title>
        <authorList>
            <person name="Richardson P."/>
            <person name="Lucas S."/>
            <person name="Rokhsar D."/>
            <person name="Wang M."/>
            <person name="Lindquist E.A."/>
        </authorList>
    </citation>
    <scope>NUCLEOTIDE SEQUENCE [LARGE SCALE MRNA]</scope>
    <scope>IDENTIFICATION</scope>
    <source>
        <tissue evidence="3">Mantle</tissue>
    </source>
</reference>
<reference key="2">
    <citation type="journal article" date="2013" name="FEBS J.">
        <title>The shell-forming proteome of Lottia gigantea reveals both deep conservations and lineage-specific novelties.</title>
        <authorList>
            <person name="Marie B."/>
            <person name="Jackson D.J."/>
            <person name="Ramos-Silva P."/>
            <person name="Zanella-Cleon I."/>
            <person name="Guichard N."/>
            <person name="Marin F."/>
        </authorList>
    </citation>
    <scope>PROTEIN SEQUENCE OF 98-105 AND 161-172</scope>
    <scope>SUBCELLULAR LOCATION</scope>
    <scope>TISSUE SPECIFICITY</scope>
    <source>
        <tissue>Shell</tissue>
    </source>
</reference>
<protein>
    <recommendedName>
        <fullName>Uncharacterized shell protein 16</fullName>
        <shortName>LUSP-16</shortName>
    </recommendedName>
</protein>